<accession>O84340</accession>
<name>PT1_CHLTR</name>
<gene>
    <name type="primary">ptsI</name>
    <name type="ordered locus">CT_336</name>
</gene>
<keyword id="KW-0963">Cytoplasm</keyword>
<keyword id="KW-0418">Kinase</keyword>
<keyword id="KW-0460">Magnesium</keyword>
<keyword id="KW-0479">Metal-binding</keyword>
<keyword id="KW-0598">Phosphotransferase system</keyword>
<keyword id="KW-1185">Reference proteome</keyword>
<keyword id="KW-0762">Sugar transport</keyword>
<keyword id="KW-0808">Transferase</keyword>
<keyword id="KW-0813">Transport</keyword>
<evidence type="ECO:0000250" key="1">
    <source>
        <dbReference type="UniProtKB" id="P08839"/>
    </source>
</evidence>
<evidence type="ECO:0000250" key="2">
    <source>
        <dbReference type="UniProtKB" id="P23533"/>
    </source>
</evidence>
<evidence type="ECO:0000305" key="3"/>
<organism>
    <name type="scientific">Chlamydia trachomatis serovar D (strain ATCC VR-885 / DSM 19411 / UW-3/Cx)</name>
    <dbReference type="NCBI Taxonomy" id="272561"/>
    <lineage>
        <taxon>Bacteria</taxon>
        <taxon>Pseudomonadati</taxon>
        <taxon>Chlamydiota</taxon>
        <taxon>Chlamydiia</taxon>
        <taxon>Chlamydiales</taxon>
        <taxon>Chlamydiaceae</taxon>
        <taxon>Chlamydia/Chlamydophila group</taxon>
        <taxon>Chlamydia</taxon>
    </lineage>
</organism>
<reference key="1">
    <citation type="journal article" date="1998" name="Science">
        <title>Genome sequence of an obligate intracellular pathogen of humans: Chlamydia trachomatis.</title>
        <authorList>
            <person name="Stephens R.S."/>
            <person name="Kalman S."/>
            <person name="Lammel C.J."/>
            <person name="Fan J."/>
            <person name="Marathe R."/>
            <person name="Aravind L."/>
            <person name="Mitchell W.P."/>
            <person name="Olinger L."/>
            <person name="Tatusov R.L."/>
            <person name="Zhao Q."/>
            <person name="Koonin E.V."/>
            <person name="Davis R.W."/>
        </authorList>
    </citation>
    <scope>NUCLEOTIDE SEQUENCE [LARGE SCALE GENOMIC DNA]</scope>
    <source>
        <strain>ATCC VR-885 / DSM 19411 / UW-3/Cx</strain>
    </source>
</reference>
<sequence>MSVTGQDNKELQQEFVIVGEPIVPGIGLGKALLLGKSSLRIRELTLPQEEVEHEISRYYKALKRSRSDLAALEKEAKGKQGYQEIASILQAHLEIIKDPLLTEEVVKTIRKDRKNAEFVFSSVMGEIEKSLCAVQKTTATRVDRVQDIHDISNRVIGHLCCQHKSSLGEFDQNLIVFSEELTPSEAANANPEYIRGFVSLEGAKTSHTAIVSLAKNIPYVANFTTELWDTIKEFSGTLVLINGDKGEITFNPQLSTIQTYYRKQASVSVTVPVQVQTGKNLPLISLSAQIVSTEELPMIERESPGTSVGLFRSEFMAFSLGRLPCVEEQADQYAQLVQFQCSDIHVLRLFDFGEDKECPCISSSHRSVRWLLEQEKVLKEQLQAIAIVSRIGRLKVLIPGVIDASEIALVKRLFQEEIRLLKGISENILWGSMIEIPSAVWMIEEILQESSFVALGTNDLAQYTLGTSRERSLLGERSRVPHPSVIRMIHHVVEQAKQKNVPVSVCGEMAGDPALLPMFLGLGVKELSAVIPAINSLKMRLLDLNSRECSRLTKQLLRAKTYEEVHQLLYV</sequence>
<protein>
    <recommendedName>
        <fullName evidence="1">Phosphoenolpyruvate-protein phosphotransferase</fullName>
        <ecNumber evidence="1">2.7.3.9</ecNumber>
    </recommendedName>
    <alternativeName>
        <fullName evidence="1">Phosphotransferase system, enzyme I</fullName>
    </alternativeName>
</protein>
<dbReference type="EC" id="2.7.3.9" evidence="1"/>
<dbReference type="EMBL" id="AE001273">
    <property type="protein sequence ID" value="AAC67931.1"/>
    <property type="molecule type" value="Genomic_DNA"/>
</dbReference>
<dbReference type="PIR" id="C71528">
    <property type="entry name" value="C71528"/>
</dbReference>
<dbReference type="RefSeq" id="NP_219843.1">
    <property type="nucleotide sequence ID" value="NC_000117.1"/>
</dbReference>
<dbReference type="SMR" id="O84340"/>
<dbReference type="FunCoup" id="O84340">
    <property type="interactions" value="200"/>
</dbReference>
<dbReference type="STRING" id="272561.CT_336"/>
<dbReference type="EnsemblBacteria" id="AAC67931">
    <property type="protein sequence ID" value="AAC67931"/>
    <property type="gene ID" value="CT_336"/>
</dbReference>
<dbReference type="GeneID" id="884783"/>
<dbReference type="KEGG" id="ctr:CT_336"/>
<dbReference type="PATRIC" id="fig|272561.5.peg.362"/>
<dbReference type="HOGENOM" id="CLU_007308_7_0_0"/>
<dbReference type="InParanoid" id="O84340"/>
<dbReference type="OrthoDB" id="9765468at2"/>
<dbReference type="Proteomes" id="UP000000431">
    <property type="component" value="Chromosome"/>
</dbReference>
<dbReference type="GO" id="GO:0005737">
    <property type="term" value="C:cytoplasm"/>
    <property type="evidence" value="ECO:0007669"/>
    <property type="project" value="UniProtKB-SubCell"/>
</dbReference>
<dbReference type="GO" id="GO:0016301">
    <property type="term" value="F:kinase activity"/>
    <property type="evidence" value="ECO:0007669"/>
    <property type="project" value="UniProtKB-KW"/>
</dbReference>
<dbReference type="GO" id="GO:0046872">
    <property type="term" value="F:metal ion binding"/>
    <property type="evidence" value="ECO:0007669"/>
    <property type="project" value="UniProtKB-KW"/>
</dbReference>
<dbReference type="GO" id="GO:0008965">
    <property type="term" value="F:phosphoenolpyruvate-protein phosphotransferase activity"/>
    <property type="evidence" value="ECO:0000318"/>
    <property type="project" value="GO_Central"/>
</dbReference>
<dbReference type="GO" id="GO:0015764">
    <property type="term" value="P:N-acetylglucosamine transport"/>
    <property type="evidence" value="ECO:0000318"/>
    <property type="project" value="GO_Central"/>
</dbReference>
<dbReference type="GO" id="GO:0009401">
    <property type="term" value="P:phosphoenolpyruvate-dependent sugar phosphotransferase system"/>
    <property type="evidence" value="ECO:0007669"/>
    <property type="project" value="UniProtKB-KW"/>
</dbReference>
<dbReference type="Gene3D" id="3.20.20.60">
    <property type="entry name" value="Phosphoenolpyruvate-binding domains"/>
    <property type="match status" value="1"/>
</dbReference>
<dbReference type="Gene3D" id="3.50.30.10">
    <property type="entry name" value="Phosphohistidine domain"/>
    <property type="match status" value="1"/>
</dbReference>
<dbReference type="Gene3D" id="1.10.274.10">
    <property type="entry name" value="PtsI, HPr-binding domain"/>
    <property type="match status" value="1"/>
</dbReference>
<dbReference type="InterPro" id="IPR008279">
    <property type="entry name" value="PEP-util_enz_mobile_dom"/>
</dbReference>
<dbReference type="InterPro" id="IPR050499">
    <property type="entry name" value="PEP-utilizing_PTS_enzyme"/>
</dbReference>
<dbReference type="InterPro" id="IPR000121">
    <property type="entry name" value="PEP_util_C"/>
</dbReference>
<dbReference type="InterPro" id="IPR023151">
    <property type="entry name" value="PEP_util_CS"/>
</dbReference>
<dbReference type="InterPro" id="IPR036637">
    <property type="entry name" value="Phosphohistidine_dom_sf"/>
</dbReference>
<dbReference type="InterPro" id="IPR006318">
    <property type="entry name" value="PTS_EI-like"/>
</dbReference>
<dbReference type="InterPro" id="IPR008731">
    <property type="entry name" value="PTS_EIN"/>
</dbReference>
<dbReference type="InterPro" id="IPR036618">
    <property type="entry name" value="PtsI_HPr-bd_sf"/>
</dbReference>
<dbReference type="InterPro" id="IPR015813">
    <property type="entry name" value="Pyrv/PenolPyrv_kinase-like_dom"/>
</dbReference>
<dbReference type="InterPro" id="IPR040442">
    <property type="entry name" value="Pyrv_kinase-like_dom_sf"/>
</dbReference>
<dbReference type="NCBIfam" id="TIGR01417">
    <property type="entry name" value="PTS_I_fam"/>
    <property type="match status" value="1"/>
</dbReference>
<dbReference type="PANTHER" id="PTHR46244">
    <property type="entry name" value="PHOSPHOENOLPYRUVATE-PROTEIN PHOSPHOTRANSFERASE"/>
    <property type="match status" value="1"/>
</dbReference>
<dbReference type="PANTHER" id="PTHR46244:SF3">
    <property type="entry name" value="PHOSPHOENOLPYRUVATE-PROTEIN PHOSPHOTRANSFERASE"/>
    <property type="match status" value="1"/>
</dbReference>
<dbReference type="Pfam" id="PF05524">
    <property type="entry name" value="PEP-utilisers_N"/>
    <property type="match status" value="1"/>
</dbReference>
<dbReference type="Pfam" id="PF00391">
    <property type="entry name" value="PEP-utilizers"/>
    <property type="match status" value="1"/>
</dbReference>
<dbReference type="Pfam" id="PF02896">
    <property type="entry name" value="PEP-utilizers_C"/>
    <property type="match status" value="1"/>
</dbReference>
<dbReference type="PRINTS" id="PR01736">
    <property type="entry name" value="PHPHTRNFRASE"/>
</dbReference>
<dbReference type="SUPFAM" id="SSF47831">
    <property type="entry name" value="Enzyme I of the PEP:sugar phosphotransferase system HPr-binding (sub)domain"/>
    <property type="match status" value="1"/>
</dbReference>
<dbReference type="SUPFAM" id="SSF51621">
    <property type="entry name" value="Phosphoenolpyruvate/pyruvate domain"/>
    <property type="match status" value="1"/>
</dbReference>
<dbReference type="SUPFAM" id="SSF52009">
    <property type="entry name" value="Phosphohistidine domain"/>
    <property type="match status" value="1"/>
</dbReference>
<dbReference type="PROSITE" id="PS00742">
    <property type="entry name" value="PEP_ENZYMES_2"/>
    <property type="match status" value="1"/>
</dbReference>
<comment type="function">
    <text evidence="1">General (non sugar-specific) component of the phosphoenolpyruvate-dependent sugar phosphotransferase system (sugar PTS). This major carbohydrate active-transport system catalyzes the phosphorylation of incoming sugar substrates concomitantly with their translocation across the cell membrane. Enzyme I transfers the phosphoryl group from phosphoenolpyruvate (PEP) to the phosphoryl carrier protein (HPr).</text>
</comment>
<comment type="catalytic activity">
    <reaction evidence="1">
        <text>L-histidyl-[protein] + phosphoenolpyruvate = N(pros)-phospho-L-histidyl-[protein] + pyruvate</text>
        <dbReference type="Rhea" id="RHEA:23880"/>
        <dbReference type="Rhea" id="RHEA-COMP:9745"/>
        <dbReference type="Rhea" id="RHEA-COMP:9746"/>
        <dbReference type="ChEBI" id="CHEBI:15361"/>
        <dbReference type="ChEBI" id="CHEBI:29979"/>
        <dbReference type="ChEBI" id="CHEBI:58702"/>
        <dbReference type="ChEBI" id="CHEBI:64837"/>
        <dbReference type="EC" id="2.7.3.9"/>
    </reaction>
</comment>
<comment type="cofactor">
    <cofactor evidence="1">
        <name>Mg(2+)</name>
        <dbReference type="ChEBI" id="CHEBI:18420"/>
    </cofactor>
</comment>
<comment type="subunit">
    <text evidence="1">Homodimer.</text>
</comment>
<comment type="subcellular location">
    <subcellularLocation>
        <location evidence="3">Cytoplasm</location>
    </subcellularLocation>
</comment>
<comment type="domain">
    <text evidence="1">The N-terminal domain contains the HPr binding site, the central domain the pyrophosphate/phosphate carrier histidine, and the C-terminal domain the pyruvate binding site.</text>
</comment>
<comment type="miscellaneous">
    <text evidence="1">The reaction takes place in three steps, mediated by a phosphocarrier histidine residue located on the surface of the central domain. The two first partial reactions are catalyzed at an active site located on the N-terminal domain, and the third partial reaction is catalyzed at an active site located on the C-terminal domain. For catalytic turnover, the central domain swivels from the concave surface of the N-terminal domain to that of the C-terminal domain.</text>
</comment>
<comment type="similarity">
    <text evidence="3">Belongs to the PEP-utilizing enzyme family.</text>
</comment>
<proteinExistence type="inferred from homology"/>
<feature type="chain" id="PRO_0000147066" description="Phosphoenolpyruvate-protein phosphotransferase">
    <location>
        <begin position="1"/>
        <end position="571"/>
    </location>
</feature>
<feature type="active site" description="Tele-phosphohistidine intermediate" evidence="1">
    <location>
        <position position="207"/>
    </location>
</feature>
<feature type="active site" description="Proton donor" evidence="1">
    <location>
        <position position="506"/>
    </location>
</feature>
<feature type="binding site" evidence="2">
    <location>
        <position position="312"/>
    </location>
    <ligand>
        <name>phosphoenolpyruvate</name>
        <dbReference type="ChEBI" id="CHEBI:58702"/>
    </ligand>
</feature>
<feature type="binding site" evidence="1">
    <location>
        <position position="348"/>
    </location>
    <ligand>
        <name>phosphoenolpyruvate</name>
        <dbReference type="ChEBI" id="CHEBI:58702"/>
    </ligand>
</feature>
<feature type="binding site" evidence="1">
    <location>
        <position position="435"/>
    </location>
    <ligand>
        <name>Mg(2+)</name>
        <dbReference type="ChEBI" id="CHEBI:18420"/>
    </ligand>
</feature>
<feature type="binding site" evidence="1">
    <location>
        <begin position="458"/>
        <end position="459"/>
    </location>
    <ligand>
        <name>phosphoenolpyruvate</name>
        <dbReference type="ChEBI" id="CHEBI:58702"/>
    </ligand>
</feature>
<feature type="binding site" evidence="1">
    <location>
        <position position="459"/>
    </location>
    <ligand>
        <name>Mg(2+)</name>
        <dbReference type="ChEBI" id="CHEBI:18420"/>
    </ligand>
</feature>
<feature type="binding site" evidence="2">
    <location>
        <position position="469"/>
    </location>
    <ligand>
        <name>phosphoenolpyruvate</name>
        <dbReference type="ChEBI" id="CHEBI:58702"/>
    </ligand>
</feature>